<evidence type="ECO:0000250" key="1"/>
<evidence type="ECO:0000305" key="2"/>
<name>GSTB_ECOL6</name>
<feature type="chain" id="PRO_0000186019" description="Glutathione S-transferase GstB">
    <location>
        <begin position="1"/>
        <end position="208"/>
    </location>
</feature>
<feature type="domain" description="GST N-terminal">
    <location>
        <begin position="1"/>
        <end position="83"/>
    </location>
</feature>
<feature type="domain" description="GST C-terminal">
    <location>
        <begin position="88"/>
        <end position="208"/>
    </location>
</feature>
<feature type="binding site" evidence="1">
    <location>
        <position position="12"/>
    </location>
    <ligand>
        <name>glutathione</name>
        <dbReference type="ChEBI" id="CHEBI:57925"/>
    </ligand>
</feature>
<feature type="binding site" evidence="1">
    <location>
        <position position="39"/>
    </location>
    <ligand>
        <name>glutathione</name>
        <dbReference type="ChEBI" id="CHEBI:57925"/>
    </ligand>
</feature>
<feature type="binding site" evidence="1">
    <location>
        <position position="53"/>
    </location>
    <ligand>
        <name>glutathione</name>
        <dbReference type="ChEBI" id="CHEBI:57925"/>
    </ligand>
</feature>
<feature type="binding site" evidence="1">
    <location>
        <begin position="67"/>
        <end position="68"/>
    </location>
    <ligand>
        <name>glutathione</name>
        <dbReference type="ChEBI" id="CHEBI:57925"/>
    </ligand>
</feature>
<dbReference type="EC" id="2.5.1.18"/>
<dbReference type="EMBL" id="AE014075">
    <property type="protein sequence ID" value="AAN79396.1"/>
    <property type="status" value="ALT_INIT"/>
    <property type="molecule type" value="Genomic_DNA"/>
</dbReference>
<dbReference type="RefSeq" id="WP_001295292.1">
    <property type="nucleotide sequence ID" value="NZ_CP051263.1"/>
</dbReference>
<dbReference type="SMR" id="P0ACA8"/>
<dbReference type="STRING" id="199310.c0923"/>
<dbReference type="GeneID" id="75204697"/>
<dbReference type="KEGG" id="ecc:c0923"/>
<dbReference type="eggNOG" id="COG0625">
    <property type="taxonomic scope" value="Bacteria"/>
</dbReference>
<dbReference type="HOGENOM" id="CLU_011226_6_2_6"/>
<dbReference type="Proteomes" id="UP000001410">
    <property type="component" value="Chromosome"/>
</dbReference>
<dbReference type="GO" id="GO:0004364">
    <property type="term" value="F:glutathione transferase activity"/>
    <property type="evidence" value="ECO:0007669"/>
    <property type="project" value="UniProtKB-EC"/>
</dbReference>
<dbReference type="FunFam" id="3.40.30.10:FF:000039">
    <property type="entry name" value="Glutathione S-transferase domain"/>
    <property type="match status" value="1"/>
</dbReference>
<dbReference type="FunFam" id="1.20.1050.10:FF:000013">
    <property type="entry name" value="Glutathione S-transferase GstB"/>
    <property type="match status" value="1"/>
</dbReference>
<dbReference type="Gene3D" id="1.20.1050.10">
    <property type="match status" value="1"/>
</dbReference>
<dbReference type="Gene3D" id="3.40.30.10">
    <property type="entry name" value="Glutaredoxin"/>
    <property type="match status" value="1"/>
</dbReference>
<dbReference type="InterPro" id="IPR010987">
    <property type="entry name" value="Glutathione-S-Trfase_C-like"/>
</dbReference>
<dbReference type="InterPro" id="IPR036282">
    <property type="entry name" value="Glutathione-S-Trfase_C_sf"/>
</dbReference>
<dbReference type="InterPro" id="IPR004045">
    <property type="entry name" value="Glutathione_S-Trfase_N"/>
</dbReference>
<dbReference type="InterPro" id="IPR004046">
    <property type="entry name" value="GST_C"/>
</dbReference>
<dbReference type="InterPro" id="IPR036249">
    <property type="entry name" value="Thioredoxin-like_sf"/>
</dbReference>
<dbReference type="PANTHER" id="PTHR44051:SF19">
    <property type="entry name" value="DISULFIDE-BOND OXIDOREDUCTASE YFCG"/>
    <property type="match status" value="1"/>
</dbReference>
<dbReference type="PANTHER" id="PTHR44051">
    <property type="entry name" value="GLUTATHIONE S-TRANSFERASE-RELATED"/>
    <property type="match status" value="1"/>
</dbReference>
<dbReference type="Pfam" id="PF00043">
    <property type="entry name" value="GST_C"/>
    <property type="match status" value="1"/>
</dbReference>
<dbReference type="Pfam" id="PF02798">
    <property type="entry name" value="GST_N"/>
    <property type="match status" value="1"/>
</dbReference>
<dbReference type="SFLD" id="SFLDG01150">
    <property type="entry name" value="Main.1:_Beta-like"/>
    <property type="match status" value="1"/>
</dbReference>
<dbReference type="SFLD" id="SFLDG00358">
    <property type="entry name" value="Main_(cytGST)"/>
    <property type="match status" value="1"/>
</dbReference>
<dbReference type="SUPFAM" id="SSF47616">
    <property type="entry name" value="GST C-terminal domain-like"/>
    <property type="match status" value="1"/>
</dbReference>
<dbReference type="SUPFAM" id="SSF52833">
    <property type="entry name" value="Thioredoxin-like"/>
    <property type="match status" value="1"/>
</dbReference>
<dbReference type="PROSITE" id="PS50405">
    <property type="entry name" value="GST_CTER"/>
    <property type="match status" value="1"/>
</dbReference>
<dbReference type="PROSITE" id="PS50404">
    <property type="entry name" value="GST_NTER"/>
    <property type="match status" value="1"/>
</dbReference>
<proteinExistence type="inferred from homology"/>
<gene>
    <name type="primary">gstB</name>
    <name type="ordered locus">c0923</name>
</gene>
<protein>
    <recommendedName>
        <fullName>Glutathione S-transferase GstB</fullName>
        <ecNumber>2.5.1.18</ecNumber>
    </recommendedName>
</protein>
<organism>
    <name type="scientific">Escherichia coli O6:H1 (strain CFT073 / ATCC 700928 / UPEC)</name>
    <dbReference type="NCBI Taxonomy" id="199310"/>
    <lineage>
        <taxon>Bacteria</taxon>
        <taxon>Pseudomonadati</taxon>
        <taxon>Pseudomonadota</taxon>
        <taxon>Gammaproteobacteria</taxon>
        <taxon>Enterobacterales</taxon>
        <taxon>Enterobacteriaceae</taxon>
        <taxon>Escherichia</taxon>
    </lineage>
</organism>
<keyword id="KW-1185">Reference proteome</keyword>
<keyword id="KW-0808">Transferase</keyword>
<accession>P0ACA8</accession>
<accession>P75805</accession>
<accession>Q9R7R4</accession>
<sequence length="208" mass="23713">MITLWGRNNSTNVKKVLLTLEELELPYEQILAGREFGINHDADFLAMNPNGLVPLLRDDESDLILWESNAIVRYLAAQYGQKRLWIDSPARRAEAEKWMDWANQTLSNAHRGILMGLVRTPPEERDQAAIDASCKECDALFALLDAELAKVKWFSGDEFGVGDIAIAPFIYNLFNVGLTWTPRPNLQRWYQQLTERPAVRKVVMIPVS</sequence>
<reference key="1">
    <citation type="journal article" date="2002" name="Proc. Natl. Acad. Sci. U.S.A.">
        <title>Extensive mosaic structure revealed by the complete genome sequence of uropathogenic Escherichia coli.</title>
        <authorList>
            <person name="Welch R.A."/>
            <person name="Burland V."/>
            <person name="Plunkett G. III"/>
            <person name="Redford P."/>
            <person name="Roesch P."/>
            <person name="Rasko D."/>
            <person name="Buckles E.L."/>
            <person name="Liou S.-R."/>
            <person name="Boutin A."/>
            <person name="Hackett J."/>
            <person name="Stroud D."/>
            <person name="Mayhew G.F."/>
            <person name="Rose D.J."/>
            <person name="Zhou S."/>
            <person name="Schwartz D.C."/>
            <person name="Perna N.T."/>
            <person name="Mobley H.L.T."/>
            <person name="Donnenberg M.S."/>
            <person name="Blattner F.R."/>
        </authorList>
    </citation>
    <scope>NUCLEOTIDE SEQUENCE [LARGE SCALE GENOMIC DNA]</scope>
    <source>
        <strain>CFT073 / ATCC 700928 / UPEC</strain>
    </source>
</reference>
<comment type="function">
    <text evidence="1">Conjugation of reduced glutathione to a wide number of exogenous and endogenous hydrophobic electrophiles.</text>
</comment>
<comment type="catalytic activity">
    <reaction>
        <text>RX + glutathione = an S-substituted glutathione + a halide anion + H(+)</text>
        <dbReference type="Rhea" id="RHEA:16437"/>
        <dbReference type="ChEBI" id="CHEBI:15378"/>
        <dbReference type="ChEBI" id="CHEBI:16042"/>
        <dbReference type="ChEBI" id="CHEBI:17792"/>
        <dbReference type="ChEBI" id="CHEBI:57925"/>
        <dbReference type="ChEBI" id="CHEBI:90779"/>
        <dbReference type="EC" id="2.5.1.18"/>
    </reaction>
</comment>
<comment type="similarity">
    <text evidence="2">Belongs to the GST superfamily.</text>
</comment>
<comment type="sequence caution" evidence="2">
    <conflict type="erroneous initiation">
        <sequence resource="EMBL-CDS" id="AAN79396"/>
    </conflict>
    <text>Extended N-terminus.</text>
</comment>